<evidence type="ECO:0000255" key="1">
    <source>
        <dbReference type="HAMAP-Rule" id="MF_01048"/>
    </source>
</evidence>
<organism>
    <name type="scientific">Yersinia pseudotuberculosis serotype I (strain IP32953)</name>
    <dbReference type="NCBI Taxonomy" id="273123"/>
    <lineage>
        <taxon>Bacteria</taxon>
        <taxon>Pseudomonadati</taxon>
        <taxon>Pseudomonadota</taxon>
        <taxon>Gammaproteobacteria</taxon>
        <taxon>Enterobacterales</taxon>
        <taxon>Yersiniaceae</taxon>
        <taxon>Yersinia</taxon>
    </lineage>
</organism>
<feature type="chain" id="PRO_0000160297" description="Protein PsiE homolog">
    <location>
        <begin position="1"/>
        <end position="135"/>
    </location>
</feature>
<feature type="transmembrane region" description="Helical" evidence="1">
    <location>
        <begin position="20"/>
        <end position="40"/>
    </location>
</feature>
<feature type="transmembrane region" description="Helical" evidence="1">
    <location>
        <begin position="54"/>
        <end position="74"/>
    </location>
</feature>
<feature type="transmembrane region" description="Helical" evidence="1">
    <location>
        <begin position="82"/>
        <end position="102"/>
    </location>
</feature>
<feature type="transmembrane region" description="Helical" evidence="1">
    <location>
        <begin position="107"/>
        <end position="127"/>
    </location>
</feature>
<accession>Q664X0</accession>
<dbReference type="EMBL" id="BX936398">
    <property type="protein sequence ID" value="CAH22886.1"/>
    <property type="molecule type" value="Genomic_DNA"/>
</dbReference>
<dbReference type="RefSeq" id="WP_002212086.1">
    <property type="nucleotide sequence ID" value="NZ_CP009712.1"/>
</dbReference>
<dbReference type="SMR" id="Q664X0"/>
<dbReference type="GeneID" id="96663139"/>
<dbReference type="KEGG" id="ypo:BZ17_2950"/>
<dbReference type="KEGG" id="yps:YPTB3648"/>
<dbReference type="PATRIC" id="fig|273123.14.peg.3084"/>
<dbReference type="Proteomes" id="UP000001011">
    <property type="component" value="Chromosome"/>
</dbReference>
<dbReference type="GO" id="GO:0005886">
    <property type="term" value="C:plasma membrane"/>
    <property type="evidence" value="ECO:0007669"/>
    <property type="project" value="UniProtKB-SubCell"/>
</dbReference>
<dbReference type="GO" id="GO:0016036">
    <property type="term" value="P:cellular response to phosphate starvation"/>
    <property type="evidence" value="ECO:0007669"/>
    <property type="project" value="InterPro"/>
</dbReference>
<dbReference type="HAMAP" id="MF_01048">
    <property type="entry name" value="PsiE"/>
    <property type="match status" value="1"/>
</dbReference>
<dbReference type="InterPro" id="IPR009315">
    <property type="entry name" value="P_starv_induced_PsiE"/>
</dbReference>
<dbReference type="InterPro" id="IPR020948">
    <property type="entry name" value="P_starv_induced_PsiE-like"/>
</dbReference>
<dbReference type="NCBIfam" id="NF002764">
    <property type="entry name" value="PRK02833.1-2"/>
    <property type="match status" value="1"/>
</dbReference>
<dbReference type="NCBIfam" id="NF002765">
    <property type="entry name" value="PRK02833.1-3"/>
    <property type="match status" value="1"/>
</dbReference>
<dbReference type="PANTHER" id="PTHR37819">
    <property type="entry name" value="PROTEIN PSIE"/>
    <property type="match status" value="1"/>
</dbReference>
<dbReference type="PANTHER" id="PTHR37819:SF1">
    <property type="entry name" value="PROTEIN PSIE"/>
    <property type="match status" value="1"/>
</dbReference>
<dbReference type="Pfam" id="PF06146">
    <property type="entry name" value="PsiE"/>
    <property type="match status" value="1"/>
</dbReference>
<dbReference type="PIRSF" id="PIRSF029598">
    <property type="entry name" value="PsiE"/>
    <property type="match status" value="1"/>
</dbReference>
<reference key="1">
    <citation type="journal article" date="2004" name="Proc. Natl. Acad. Sci. U.S.A.">
        <title>Insights into the evolution of Yersinia pestis through whole-genome comparison with Yersinia pseudotuberculosis.</title>
        <authorList>
            <person name="Chain P.S.G."/>
            <person name="Carniel E."/>
            <person name="Larimer F.W."/>
            <person name="Lamerdin J."/>
            <person name="Stoutland P.O."/>
            <person name="Regala W.M."/>
            <person name="Georgescu A.M."/>
            <person name="Vergez L.M."/>
            <person name="Land M.L."/>
            <person name="Motin V.L."/>
            <person name="Brubaker R.R."/>
            <person name="Fowler J."/>
            <person name="Hinnebusch J."/>
            <person name="Marceau M."/>
            <person name="Medigue C."/>
            <person name="Simonet M."/>
            <person name="Chenal-Francisque V."/>
            <person name="Souza B."/>
            <person name="Dacheux D."/>
            <person name="Elliott J.M."/>
            <person name="Derbise A."/>
            <person name="Hauser L.J."/>
            <person name="Garcia E."/>
        </authorList>
    </citation>
    <scope>NUCLEOTIDE SEQUENCE [LARGE SCALE GENOMIC DNA]</scope>
    <source>
        <strain>IP32953</strain>
    </source>
</reference>
<proteinExistence type="inferred from homology"/>
<protein>
    <recommendedName>
        <fullName evidence="1">Protein PsiE homolog</fullName>
    </recommendedName>
</protein>
<comment type="subcellular location">
    <subcellularLocation>
        <location evidence="1">Cell inner membrane</location>
        <topology evidence="1">Multi-pass membrane protein</topology>
    </subcellularLocation>
</comment>
<comment type="similarity">
    <text evidence="1">Belongs to the PsiE family.</text>
</comment>
<sequence>MAKNSRSQWIAKNLQRLLNVGLIMLAAILVVFLVKETIHLGKVLFLSNQETSSYMLIEGIVIYFLYFEFIALIVKYFESGYHFPLRYFIYIGITAIIRLIIVDHENPIDTLIYSGSILVLVVTLYLANTERLKRE</sequence>
<keyword id="KW-0997">Cell inner membrane</keyword>
<keyword id="KW-1003">Cell membrane</keyword>
<keyword id="KW-0472">Membrane</keyword>
<keyword id="KW-0812">Transmembrane</keyword>
<keyword id="KW-1133">Transmembrane helix</keyword>
<gene>
    <name evidence="1" type="primary">psiE</name>
    <name type="ordered locus">YPTB3648</name>
</gene>
<name>PSIE_YERPS</name>